<gene>
    <name type="primary">HCAR</name>
    <name type="ordered locus">Os04g0320100</name>
    <name type="ordered locus">LOC_Os04g25400</name>
    <name type="ORF">OSJNBa0041M06.1</name>
    <name type="ORF">OSJNBb0026L04.9</name>
</gene>
<feature type="transit peptide" description="Chloroplast" evidence="2">
    <location>
        <begin position="1"/>
        <end position="44"/>
    </location>
</feature>
<feature type="chain" id="PRO_0000415616" description="7-hydroxymethyl chlorophyll a reductase, chloroplastic">
    <location>
        <begin position="45"/>
        <end position="471"/>
    </location>
</feature>
<protein>
    <recommendedName>
        <fullName>7-hydroxymethyl chlorophyll a reductase, chloroplastic</fullName>
        <ecNumber evidence="1">1.17.7.2</ecNumber>
    </recommendedName>
</protein>
<reference key="1">
    <citation type="journal article" date="2002" name="Nature">
        <title>Sequence and analysis of rice chromosome 4.</title>
        <authorList>
            <person name="Feng Q."/>
            <person name="Zhang Y."/>
            <person name="Hao P."/>
            <person name="Wang S."/>
            <person name="Fu G."/>
            <person name="Huang Y."/>
            <person name="Li Y."/>
            <person name="Zhu J."/>
            <person name="Liu Y."/>
            <person name="Hu X."/>
            <person name="Jia P."/>
            <person name="Zhang Y."/>
            <person name="Zhao Q."/>
            <person name="Ying K."/>
            <person name="Yu S."/>
            <person name="Tang Y."/>
            <person name="Weng Q."/>
            <person name="Zhang L."/>
            <person name="Lu Y."/>
            <person name="Mu J."/>
            <person name="Lu Y."/>
            <person name="Zhang L.S."/>
            <person name="Yu Z."/>
            <person name="Fan D."/>
            <person name="Liu X."/>
            <person name="Lu T."/>
            <person name="Li C."/>
            <person name="Wu Y."/>
            <person name="Sun T."/>
            <person name="Lei H."/>
            <person name="Li T."/>
            <person name="Hu H."/>
            <person name="Guan J."/>
            <person name="Wu M."/>
            <person name="Zhang R."/>
            <person name="Zhou B."/>
            <person name="Chen Z."/>
            <person name="Chen L."/>
            <person name="Jin Z."/>
            <person name="Wang R."/>
            <person name="Yin H."/>
            <person name="Cai Z."/>
            <person name="Ren S."/>
            <person name="Lv G."/>
            <person name="Gu W."/>
            <person name="Zhu G."/>
            <person name="Tu Y."/>
            <person name="Jia J."/>
            <person name="Zhang Y."/>
            <person name="Chen J."/>
            <person name="Kang H."/>
            <person name="Chen X."/>
            <person name="Shao C."/>
            <person name="Sun Y."/>
            <person name="Hu Q."/>
            <person name="Zhang X."/>
            <person name="Zhang W."/>
            <person name="Wang L."/>
            <person name="Ding C."/>
            <person name="Sheng H."/>
            <person name="Gu J."/>
            <person name="Chen S."/>
            <person name="Ni L."/>
            <person name="Zhu F."/>
            <person name="Chen W."/>
            <person name="Lan L."/>
            <person name="Lai Y."/>
            <person name="Cheng Z."/>
            <person name="Gu M."/>
            <person name="Jiang J."/>
            <person name="Li J."/>
            <person name="Hong G."/>
            <person name="Xue Y."/>
            <person name="Han B."/>
        </authorList>
    </citation>
    <scope>NUCLEOTIDE SEQUENCE [LARGE SCALE GENOMIC DNA]</scope>
    <source>
        <strain>cv. Nipponbare</strain>
    </source>
</reference>
<reference key="2">
    <citation type="journal article" date="2005" name="Nature">
        <title>The map-based sequence of the rice genome.</title>
        <authorList>
            <consortium name="International rice genome sequencing project (IRGSP)"/>
        </authorList>
    </citation>
    <scope>NUCLEOTIDE SEQUENCE [LARGE SCALE GENOMIC DNA]</scope>
    <source>
        <strain>cv. Nipponbare</strain>
    </source>
</reference>
<reference key="3">
    <citation type="journal article" date="2008" name="Nucleic Acids Res.">
        <title>The rice annotation project database (RAP-DB): 2008 update.</title>
        <authorList>
            <consortium name="The rice annotation project (RAP)"/>
        </authorList>
    </citation>
    <scope>GENOME REANNOTATION</scope>
    <source>
        <strain>cv. Nipponbare</strain>
    </source>
</reference>
<reference key="4">
    <citation type="journal article" date="2013" name="Rice">
        <title>Improvement of the Oryza sativa Nipponbare reference genome using next generation sequence and optical map data.</title>
        <authorList>
            <person name="Kawahara Y."/>
            <person name="de la Bastide M."/>
            <person name="Hamilton J.P."/>
            <person name="Kanamori H."/>
            <person name="McCombie W.R."/>
            <person name="Ouyang S."/>
            <person name="Schwartz D.C."/>
            <person name="Tanaka T."/>
            <person name="Wu J."/>
            <person name="Zhou S."/>
            <person name="Childs K.L."/>
            <person name="Davidson R.M."/>
            <person name="Lin H."/>
            <person name="Quesada-Ocampo L."/>
            <person name="Vaillancourt B."/>
            <person name="Sakai H."/>
            <person name="Lee S.S."/>
            <person name="Kim J."/>
            <person name="Numa H."/>
            <person name="Itoh T."/>
            <person name="Buell C.R."/>
            <person name="Matsumoto T."/>
        </authorList>
    </citation>
    <scope>GENOME REANNOTATION</scope>
    <source>
        <strain>cv. Nipponbare</strain>
    </source>
</reference>
<proteinExistence type="inferred from homology"/>
<sequence>MARCISFLSTSSSLPCATKPPCCSVSSVLPSSPSSHQCRGRKTSCGSIRALREDWRERSKAIPPGGVYPAKDHCSQCGLCDTYYIAHVKNACAFLGDGMSRVEDLEPLVHGRGRKQDMDEMYFGVYEQLLYARKMKPVEGAQWTGIVTTIAVEMLKANMVDAVVCVQSDPDDRLAPMPVLARTPDEVIAAKGVKPTLSPNLNTLALVEAAGVKRLLFCGVGCQVQALRSVEKYLGLEKLYVLGTNCVDNGTREGLDKFLKAASSEPETVLHYEFMQDYKVHLKHLDGHIEEVPYFCLPAKDLVDVIAPSCYSCFDYTNGLADLVVGYMGVPKYPGVSMTQHPQYITVRNDRGREMLSLVEGLLESTPTVSSGVRQPFVIETVKADDEAKQGRGPSQPAPTFVGNVIAFLLNLIGPKGLEFARYSLDYHTIRNYLHVNRAWGKQRAEQHIPSYAKKIVEAYDKDGRIESMLQ</sequence>
<comment type="function">
    <text evidence="1">Probable iron-sulfur flavoprotein that converts 7-hydroxymethyl chlorophyll a to chlorophyll a using ferredoxin as a reducing equivalent. Catalyzes the reduction of a hydroxymethyl group to a methyl group.</text>
</comment>
<comment type="catalytic activity">
    <reaction evidence="1">
        <text>chlorophyll a + 2 oxidized [2Fe-2S]-[ferredoxin] + H2O = 7(1)-hydroxychlorophyll a + 2 reduced [2Fe-2S]-[ferredoxin] + 2 H(+)</text>
        <dbReference type="Rhea" id="RHEA:53544"/>
        <dbReference type="Rhea" id="RHEA-COMP:10000"/>
        <dbReference type="Rhea" id="RHEA-COMP:10001"/>
        <dbReference type="ChEBI" id="CHEBI:15377"/>
        <dbReference type="ChEBI" id="CHEBI:15378"/>
        <dbReference type="ChEBI" id="CHEBI:33737"/>
        <dbReference type="ChEBI" id="CHEBI:33738"/>
        <dbReference type="ChEBI" id="CHEBI:58416"/>
        <dbReference type="ChEBI" id="CHEBI:83377"/>
        <dbReference type="EC" id="1.17.7.2"/>
    </reaction>
</comment>
<comment type="cofactor">
    <cofactor evidence="1">
        <name>FAD</name>
        <dbReference type="ChEBI" id="CHEBI:57692"/>
    </cofactor>
</comment>
<comment type="cofactor">
    <cofactor evidence="1">
        <name>iron-sulfur cluster</name>
        <dbReference type="ChEBI" id="CHEBI:30408"/>
    </cofactor>
</comment>
<comment type="subcellular location">
    <subcellularLocation>
        <location evidence="1">Plastid</location>
        <location evidence="1">Chloroplast</location>
    </subcellularLocation>
</comment>
<comment type="similarity">
    <text evidence="3">Belongs to the FrhB family.</text>
</comment>
<comment type="sequence caution" evidence="3">
    <conflict type="erroneous gene model prediction">
        <sequence resource="EMBL-CDS" id="BAF14371"/>
    </conflict>
</comment>
<organism>
    <name type="scientific">Oryza sativa subsp. japonica</name>
    <name type="common">Rice</name>
    <dbReference type="NCBI Taxonomy" id="39947"/>
    <lineage>
        <taxon>Eukaryota</taxon>
        <taxon>Viridiplantae</taxon>
        <taxon>Streptophyta</taxon>
        <taxon>Embryophyta</taxon>
        <taxon>Tracheophyta</taxon>
        <taxon>Spermatophyta</taxon>
        <taxon>Magnoliopsida</taxon>
        <taxon>Liliopsida</taxon>
        <taxon>Poales</taxon>
        <taxon>Poaceae</taxon>
        <taxon>BOP clade</taxon>
        <taxon>Oryzoideae</taxon>
        <taxon>Oryzeae</taxon>
        <taxon>Oryzinae</taxon>
        <taxon>Oryza</taxon>
        <taxon>Oryza sativa</taxon>
    </lineage>
</organism>
<dbReference type="EC" id="1.17.7.2" evidence="1"/>
<dbReference type="EMBL" id="AL606443">
    <property type="protein sequence ID" value="CAE01504.2"/>
    <property type="molecule type" value="Genomic_DNA"/>
</dbReference>
<dbReference type="EMBL" id="AL663021">
    <property type="protein sequence ID" value="CAE04699.2"/>
    <property type="molecule type" value="Genomic_DNA"/>
</dbReference>
<dbReference type="EMBL" id="AP008210">
    <property type="protein sequence ID" value="BAF14371.1"/>
    <property type="status" value="ALT_SEQ"/>
    <property type="molecule type" value="Genomic_DNA"/>
</dbReference>
<dbReference type="EMBL" id="AP014960">
    <property type="status" value="NOT_ANNOTATED_CDS"/>
    <property type="molecule type" value="Genomic_DNA"/>
</dbReference>
<dbReference type="SMR" id="Q7XTG7"/>
<dbReference type="FunCoup" id="Q7XTG7">
    <property type="interactions" value="94"/>
</dbReference>
<dbReference type="STRING" id="39947.Q7XTG7"/>
<dbReference type="CAZy" id="GT1">
    <property type="family name" value="Glycosyltransferase Family 1"/>
</dbReference>
<dbReference type="PaxDb" id="39947-Q7XTG7"/>
<dbReference type="EnsemblPlants" id="Os04t0320100-02">
    <property type="protein sequence ID" value="Os04t0320100-02"/>
    <property type="gene ID" value="Os04g0320100"/>
</dbReference>
<dbReference type="Gramene" id="Os04t0320100-02">
    <property type="protein sequence ID" value="Os04t0320100-02"/>
    <property type="gene ID" value="Os04g0320100"/>
</dbReference>
<dbReference type="KEGG" id="dosa:Os04g0320100"/>
<dbReference type="KEGG" id="osa:4335472"/>
<dbReference type="eggNOG" id="ENOG502QR65">
    <property type="taxonomic scope" value="Eukaryota"/>
</dbReference>
<dbReference type="HOGENOM" id="CLU_850978_0_0_1"/>
<dbReference type="InParanoid" id="Q7XTG7"/>
<dbReference type="OrthoDB" id="191568at2759"/>
<dbReference type="Proteomes" id="UP000000763">
    <property type="component" value="Chromosome 4"/>
</dbReference>
<dbReference type="Proteomes" id="UP000059680">
    <property type="component" value="Chromosome 4"/>
</dbReference>
<dbReference type="ExpressionAtlas" id="Q7XTG7">
    <property type="expression patterns" value="baseline and differential"/>
</dbReference>
<dbReference type="GO" id="GO:0009507">
    <property type="term" value="C:chloroplast"/>
    <property type="evidence" value="ECO:0000318"/>
    <property type="project" value="GO_Central"/>
</dbReference>
<dbReference type="GO" id="GO:0090415">
    <property type="term" value="F:7-hydroxymethyl chlorophyll a reductase activity"/>
    <property type="evidence" value="ECO:0000318"/>
    <property type="project" value="GO_Central"/>
</dbReference>
<dbReference type="GO" id="GO:0051536">
    <property type="term" value="F:iron-sulfur cluster binding"/>
    <property type="evidence" value="ECO:0007669"/>
    <property type="project" value="UniProtKB-KW"/>
</dbReference>
<dbReference type="GO" id="GO:0046872">
    <property type="term" value="F:metal ion binding"/>
    <property type="evidence" value="ECO:0007669"/>
    <property type="project" value="UniProtKB-KW"/>
</dbReference>
<dbReference type="GO" id="GO:0033354">
    <property type="term" value="P:chlorophyll cycle"/>
    <property type="evidence" value="ECO:0000318"/>
    <property type="project" value="GO_Central"/>
</dbReference>
<dbReference type="InterPro" id="IPR007516">
    <property type="entry name" value="Co_F420_Hydgase/DH_bsu_N"/>
</dbReference>
<dbReference type="InterPro" id="IPR045220">
    <property type="entry name" value="FRHB/FDHB/HCAR-like"/>
</dbReference>
<dbReference type="InterPro" id="IPR007525">
    <property type="entry name" value="FrhB_FdhB_C"/>
</dbReference>
<dbReference type="InterPro" id="IPR011254">
    <property type="entry name" value="Prismane-like_sf"/>
</dbReference>
<dbReference type="PANTHER" id="PTHR31332">
    <property type="entry name" value="7-HYDROXYMETHYL CHLOROPHYLL A REDUCTASE, CHLOROPLASTIC"/>
    <property type="match status" value="1"/>
</dbReference>
<dbReference type="PANTHER" id="PTHR31332:SF0">
    <property type="entry name" value="7-HYDROXYMETHYL CHLOROPHYLL A REDUCTASE, CHLOROPLASTIC"/>
    <property type="match status" value="1"/>
</dbReference>
<dbReference type="Pfam" id="PF04432">
    <property type="entry name" value="FrhB_FdhB_C"/>
    <property type="match status" value="1"/>
</dbReference>
<dbReference type="Pfam" id="PF04422">
    <property type="entry name" value="FrhB_FdhB_N"/>
    <property type="match status" value="1"/>
</dbReference>
<dbReference type="SUPFAM" id="SSF56821">
    <property type="entry name" value="Prismane protein-like"/>
    <property type="match status" value="1"/>
</dbReference>
<evidence type="ECO:0000250" key="1">
    <source>
        <dbReference type="UniProtKB" id="Q8GS60"/>
    </source>
</evidence>
<evidence type="ECO:0000255" key="2"/>
<evidence type="ECO:0000305" key="3"/>
<accession>Q7XTG7</accession>
<accession>Q0JE66</accession>
<name>HCAR_ORYSJ</name>
<keyword id="KW-0150">Chloroplast</keyword>
<keyword id="KW-0274">FAD</keyword>
<keyword id="KW-0285">Flavoprotein</keyword>
<keyword id="KW-0408">Iron</keyword>
<keyword id="KW-0411">Iron-sulfur</keyword>
<keyword id="KW-0479">Metal-binding</keyword>
<keyword id="KW-0560">Oxidoreductase</keyword>
<keyword id="KW-0934">Plastid</keyword>
<keyword id="KW-1185">Reference proteome</keyword>
<keyword id="KW-0809">Transit peptide</keyword>